<dbReference type="EMBL" id="AP008230">
    <property type="protein sequence ID" value="BAE85705.1"/>
    <property type="molecule type" value="Genomic_DNA"/>
</dbReference>
<dbReference type="RefSeq" id="WP_011461465.1">
    <property type="nucleotide sequence ID" value="NC_007907.1"/>
</dbReference>
<dbReference type="SMR" id="Q24QI7"/>
<dbReference type="STRING" id="138119.DSY3916"/>
<dbReference type="KEGG" id="dsy:DSY3916"/>
<dbReference type="eggNOG" id="COG3705">
    <property type="taxonomic scope" value="Bacteria"/>
</dbReference>
<dbReference type="HOGENOM" id="CLU_025113_0_0_9"/>
<dbReference type="UniPathway" id="UPA00031">
    <property type="reaction ID" value="UER00006"/>
</dbReference>
<dbReference type="Proteomes" id="UP000001946">
    <property type="component" value="Chromosome"/>
</dbReference>
<dbReference type="GO" id="GO:0005737">
    <property type="term" value="C:cytoplasm"/>
    <property type="evidence" value="ECO:0007669"/>
    <property type="project" value="UniProtKB-SubCell"/>
</dbReference>
<dbReference type="GO" id="GO:0140096">
    <property type="term" value="F:catalytic activity, acting on a protein"/>
    <property type="evidence" value="ECO:0007669"/>
    <property type="project" value="UniProtKB-ARBA"/>
</dbReference>
<dbReference type="GO" id="GO:0004821">
    <property type="term" value="F:histidine-tRNA ligase activity"/>
    <property type="evidence" value="ECO:0007669"/>
    <property type="project" value="TreeGrafter"/>
</dbReference>
<dbReference type="GO" id="GO:0016740">
    <property type="term" value="F:transferase activity"/>
    <property type="evidence" value="ECO:0007669"/>
    <property type="project" value="UniProtKB-ARBA"/>
</dbReference>
<dbReference type="GO" id="GO:0006427">
    <property type="term" value="P:histidyl-tRNA aminoacylation"/>
    <property type="evidence" value="ECO:0007669"/>
    <property type="project" value="TreeGrafter"/>
</dbReference>
<dbReference type="GO" id="GO:0000105">
    <property type="term" value="P:L-histidine biosynthetic process"/>
    <property type="evidence" value="ECO:0007669"/>
    <property type="project" value="UniProtKB-UniRule"/>
</dbReference>
<dbReference type="CDD" id="cd00773">
    <property type="entry name" value="HisRS-like_core"/>
    <property type="match status" value="1"/>
</dbReference>
<dbReference type="Gene3D" id="3.30.930.10">
    <property type="entry name" value="Bira Bifunctional Protein, Domain 2"/>
    <property type="match status" value="1"/>
</dbReference>
<dbReference type="HAMAP" id="MF_00125">
    <property type="entry name" value="HisZ"/>
    <property type="match status" value="1"/>
</dbReference>
<dbReference type="InterPro" id="IPR006195">
    <property type="entry name" value="aa-tRNA-synth_II"/>
</dbReference>
<dbReference type="InterPro" id="IPR045864">
    <property type="entry name" value="aa-tRNA-synth_II/BPL/LPL"/>
</dbReference>
<dbReference type="InterPro" id="IPR041715">
    <property type="entry name" value="HisRS-like_core"/>
</dbReference>
<dbReference type="InterPro" id="IPR004516">
    <property type="entry name" value="HisRS/HisZ"/>
</dbReference>
<dbReference type="InterPro" id="IPR004517">
    <property type="entry name" value="HisZ"/>
</dbReference>
<dbReference type="NCBIfam" id="TIGR00443">
    <property type="entry name" value="hisZ_biosyn_reg"/>
    <property type="match status" value="1"/>
</dbReference>
<dbReference type="PANTHER" id="PTHR43707:SF1">
    <property type="entry name" value="HISTIDINE--TRNA LIGASE, MITOCHONDRIAL-RELATED"/>
    <property type="match status" value="1"/>
</dbReference>
<dbReference type="PANTHER" id="PTHR43707">
    <property type="entry name" value="HISTIDYL-TRNA SYNTHETASE"/>
    <property type="match status" value="1"/>
</dbReference>
<dbReference type="Pfam" id="PF13393">
    <property type="entry name" value="tRNA-synt_His"/>
    <property type="match status" value="1"/>
</dbReference>
<dbReference type="PIRSF" id="PIRSF001549">
    <property type="entry name" value="His-tRNA_synth"/>
    <property type="match status" value="1"/>
</dbReference>
<dbReference type="SUPFAM" id="SSF55681">
    <property type="entry name" value="Class II aaRS and biotin synthetases"/>
    <property type="match status" value="1"/>
</dbReference>
<dbReference type="PROSITE" id="PS50862">
    <property type="entry name" value="AA_TRNA_LIGASE_II"/>
    <property type="match status" value="1"/>
</dbReference>
<evidence type="ECO:0000255" key="1">
    <source>
        <dbReference type="HAMAP-Rule" id="MF_00125"/>
    </source>
</evidence>
<reference key="1">
    <citation type="journal article" date="2006" name="J. Bacteriol.">
        <title>Complete genome sequence of the dehalorespiring bacterium Desulfitobacterium hafniense Y51 and comparison with Dehalococcoides ethenogenes 195.</title>
        <authorList>
            <person name="Nonaka H."/>
            <person name="Keresztes G."/>
            <person name="Shinoda Y."/>
            <person name="Ikenaga Y."/>
            <person name="Abe M."/>
            <person name="Naito K."/>
            <person name="Inatomi K."/>
            <person name="Furukawa K."/>
            <person name="Inui M."/>
            <person name="Yukawa H."/>
        </authorList>
    </citation>
    <scope>NUCLEOTIDE SEQUENCE [LARGE SCALE GENOMIC DNA]</scope>
    <source>
        <strain>Y51</strain>
    </source>
</reference>
<organism>
    <name type="scientific">Desulfitobacterium hafniense (strain Y51)</name>
    <dbReference type="NCBI Taxonomy" id="138119"/>
    <lineage>
        <taxon>Bacteria</taxon>
        <taxon>Bacillati</taxon>
        <taxon>Bacillota</taxon>
        <taxon>Clostridia</taxon>
        <taxon>Eubacteriales</taxon>
        <taxon>Desulfitobacteriaceae</taxon>
        <taxon>Desulfitobacterium</taxon>
    </lineage>
</organism>
<feature type="chain" id="PRO_1000016261" description="ATP phosphoribosyltransferase regulatory subunit">
    <location>
        <begin position="1"/>
        <end position="383"/>
    </location>
</feature>
<protein>
    <recommendedName>
        <fullName evidence="1">ATP phosphoribosyltransferase regulatory subunit</fullName>
    </recommendedName>
</protein>
<proteinExistence type="inferred from homology"/>
<gene>
    <name evidence="1" type="primary">hisZ</name>
    <name type="ordered locus">DSY3916</name>
</gene>
<sequence length="383" mass="42796">MPRSSLGLRIPEGMHDLLPDELALQEQAETSALDLFKAWAYQKVATPTLEYGACIQPVEEEGDSFFKLFDRQGHVLVLRPELTTSIARMVSTRMRGTAFPLRLCYAADVFRYSKSHKQEFRQVGVELIGSASSAADAEVVALAIEALRKIGGMDFQINLGHMGIFTGIMAELGVPQEFQLHYQEKLARKDFVGIERLVKDYGFETRVQDVLLKLPHLHGKEDMLDQVLEWSRRPSLLEAVNALRQVYRYLKDFGVQDYVSLDLGILRGFSYYTGAVFEGYVPGVGFPVVEGGRYDALYGDFGEDAPATGFAINLKAIIEQMVCSNAERPEVLVYGSDVSKVIAEARKLRQTGKRVEMCLESLTQEQAMESAECKGIKEVVCAR</sequence>
<accession>Q24QI7</accession>
<keyword id="KW-0028">Amino-acid biosynthesis</keyword>
<keyword id="KW-0963">Cytoplasm</keyword>
<keyword id="KW-0368">Histidine biosynthesis</keyword>
<keyword id="KW-1185">Reference proteome</keyword>
<name>HISZ_DESHY</name>
<comment type="function">
    <text evidence="1">Required for the first step of histidine biosynthesis. May allow the feedback regulation of ATP phosphoribosyltransferase activity by histidine.</text>
</comment>
<comment type="pathway">
    <text evidence="1">Amino-acid biosynthesis; L-histidine biosynthesis; L-histidine from 5-phospho-alpha-D-ribose 1-diphosphate: step 1/9.</text>
</comment>
<comment type="subunit">
    <text evidence="1">Heteromultimer composed of HisG and HisZ subunits.</text>
</comment>
<comment type="subcellular location">
    <subcellularLocation>
        <location evidence="1">Cytoplasm</location>
    </subcellularLocation>
</comment>
<comment type="miscellaneous">
    <text>This function is generally fulfilled by the C-terminal part of HisG, which is missing in some bacteria such as this one.</text>
</comment>
<comment type="similarity">
    <text evidence="1">Belongs to the class-II aminoacyl-tRNA synthetase family. HisZ subfamily.</text>
</comment>